<accession>B3DSL6</accession>
<proteinExistence type="inferred from homology"/>
<comment type="function">
    <text evidence="1">Involved in protein export. Acts as a chaperone by maintaining the newly synthesized protein in an open conformation. Functions as a peptidyl-prolyl cis-trans isomerase.</text>
</comment>
<comment type="catalytic activity">
    <reaction evidence="1">
        <text>[protein]-peptidylproline (omega=180) = [protein]-peptidylproline (omega=0)</text>
        <dbReference type="Rhea" id="RHEA:16237"/>
        <dbReference type="Rhea" id="RHEA-COMP:10747"/>
        <dbReference type="Rhea" id="RHEA-COMP:10748"/>
        <dbReference type="ChEBI" id="CHEBI:83833"/>
        <dbReference type="ChEBI" id="CHEBI:83834"/>
        <dbReference type="EC" id="5.2.1.8"/>
    </reaction>
</comment>
<comment type="subcellular location">
    <subcellularLocation>
        <location>Cytoplasm</location>
    </subcellularLocation>
    <text evidence="1">About half TF is bound to the ribosome near the polypeptide exit tunnel while the other half is free in the cytoplasm.</text>
</comment>
<comment type="domain">
    <text evidence="1">Consists of 3 domains; the N-terminus binds the ribosome, the middle domain has PPIase activity, while the C-terminus has intrinsic chaperone activity on its own.</text>
</comment>
<comment type="similarity">
    <text evidence="1">Belongs to the FKBP-type PPIase family. Tig subfamily.</text>
</comment>
<dbReference type="EC" id="5.2.1.8" evidence="1"/>
<dbReference type="EMBL" id="CP000605">
    <property type="protein sequence ID" value="ACD98135.1"/>
    <property type="molecule type" value="Genomic_DNA"/>
</dbReference>
<dbReference type="RefSeq" id="WP_007052055.1">
    <property type="nucleotide sequence ID" value="NC_010816.1"/>
</dbReference>
<dbReference type="SMR" id="B3DSL6"/>
<dbReference type="GeneID" id="69577911"/>
<dbReference type="KEGG" id="blj:BLD_0689"/>
<dbReference type="HOGENOM" id="CLU_033058_3_0_11"/>
<dbReference type="Proteomes" id="UP000002419">
    <property type="component" value="Chromosome"/>
</dbReference>
<dbReference type="GO" id="GO:0005737">
    <property type="term" value="C:cytoplasm"/>
    <property type="evidence" value="ECO:0007669"/>
    <property type="project" value="UniProtKB-SubCell"/>
</dbReference>
<dbReference type="GO" id="GO:0003755">
    <property type="term" value="F:peptidyl-prolyl cis-trans isomerase activity"/>
    <property type="evidence" value="ECO:0007669"/>
    <property type="project" value="UniProtKB-UniRule"/>
</dbReference>
<dbReference type="GO" id="GO:0044183">
    <property type="term" value="F:protein folding chaperone"/>
    <property type="evidence" value="ECO:0007669"/>
    <property type="project" value="TreeGrafter"/>
</dbReference>
<dbReference type="GO" id="GO:0043022">
    <property type="term" value="F:ribosome binding"/>
    <property type="evidence" value="ECO:0007669"/>
    <property type="project" value="TreeGrafter"/>
</dbReference>
<dbReference type="GO" id="GO:0051083">
    <property type="term" value="P:'de novo' cotranslational protein folding"/>
    <property type="evidence" value="ECO:0007669"/>
    <property type="project" value="TreeGrafter"/>
</dbReference>
<dbReference type="GO" id="GO:0051301">
    <property type="term" value="P:cell division"/>
    <property type="evidence" value="ECO:0007669"/>
    <property type="project" value="UniProtKB-KW"/>
</dbReference>
<dbReference type="GO" id="GO:0061077">
    <property type="term" value="P:chaperone-mediated protein folding"/>
    <property type="evidence" value="ECO:0007669"/>
    <property type="project" value="TreeGrafter"/>
</dbReference>
<dbReference type="GO" id="GO:0015031">
    <property type="term" value="P:protein transport"/>
    <property type="evidence" value="ECO:0007669"/>
    <property type="project" value="UniProtKB-UniRule"/>
</dbReference>
<dbReference type="GO" id="GO:0043335">
    <property type="term" value="P:protein unfolding"/>
    <property type="evidence" value="ECO:0007669"/>
    <property type="project" value="TreeGrafter"/>
</dbReference>
<dbReference type="Gene3D" id="3.10.50.40">
    <property type="match status" value="1"/>
</dbReference>
<dbReference type="Gene3D" id="3.30.70.1050">
    <property type="entry name" value="Trigger factor ribosome-binding domain"/>
    <property type="match status" value="1"/>
</dbReference>
<dbReference type="Gene3D" id="1.10.3120.10">
    <property type="entry name" value="Trigger factor, C-terminal domain"/>
    <property type="match status" value="1"/>
</dbReference>
<dbReference type="HAMAP" id="MF_00303">
    <property type="entry name" value="Trigger_factor_Tig"/>
    <property type="match status" value="1"/>
</dbReference>
<dbReference type="InterPro" id="IPR046357">
    <property type="entry name" value="PPIase_dom_sf"/>
</dbReference>
<dbReference type="InterPro" id="IPR001179">
    <property type="entry name" value="PPIase_FKBP_dom"/>
</dbReference>
<dbReference type="InterPro" id="IPR005215">
    <property type="entry name" value="Trig_fac"/>
</dbReference>
<dbReference type="InterPro" id="IPR008880">
    <property type="entry name" value="Trigger_fac_C"/>
</dbReference>
<dbReference type="InterPro" id="IPR037041">
    <property type="entry name" value="Trigger_fac_C_sf"/>
</dbReference>
<dbReference type="InterPro" id="IPR008881">
    <property type="entry name" value="Trigger_fac_ribosome-bd_bac"/>
</dbReference>
<dbReference type="InterPro" id="IPR036611">
    <property type="entry name" value="Trigger_fac_ribosome-bd_sf"/>
</dbReference>
<dbReference type="InterPro" id="IPR027304">
    <property type="entry name" value="Trigger_fact/SurA_dom_sf"/>
</dbReference>
<dbReference type="NCBIfam" id="TIGR00115">
    <property type="entry name" value="tig"/>
    <property type="match status" value="1"/>
</dbReference>
<dbReference type="PANTHER" id="PTHR30560">
    <property type="entry name" value="TRIGGER FACTOR CHAPERONE AND PEPTIDYL-PROLYL CIS/TRANS ISOMERASE"/>
    <property type="match status" value="1"/>
</dbReference>
<dbReference type="PANTHER" id="PTHR30560:SF3">
    <property type="entry name" value="TRIGGER FACTOR-LIKE PROTEIN TIG, CHLOROPLASTIC"/>
    <property type="match status" value="1"/>
</dbReference>
<dbReference type="Pfam" id="PF00254">
    <property type="entry name" value="FKBP_C"/>
    <property type="match status" value="1"/>
</dbReference>
<dbReference type="Pfam" id="PF05698">
    <property type="entry name" value="Trigger_C"/>
    <property type="match status" value="1"/>
</dbReference>
<dbReference type="Pfam" id="PF05697">
    <property type="entry name" value="Trigger_N"/>
    <property type="match status" value="1"/>
</dbReference>
<dbReference type="PIRSF" id="PIRSF003095">
    <property type="entry name" value="Trigger_factor"/>
    <property type="match status" value="1"/>
</dbReference>
<dbReference type="SUPFAM" id="SSF54534">
    <property type="entry name" value="FKBP-like"/>
    <property type="match status" value="1"/>
</dbReference>
<dbReference type="SUPFAM" id="SSF109998">
    <property type="entry name" value="Triger factor/SurA peptide-binding domain-like"/>
    <property type="match status" value="1"/>
</dbReference>
<dbReference type="SUPFAM" id="SSF102735">
    <property type="entry name" value="Trigger factor ribosome-binding domain"/>
    <property type="match status" value="1"/>
</dbReference>
<dbReference type="PROSITE" id="PS50059">
    <property type="entry name" value="FKBP_PPIASE"/>
    <property type="match status" value="1"/>
</dbReference>
<sequence length="459" mass="49657">MKISVRNLEPTKVKLTVTVEPEELNPYLDAARKEIAKQVNVPGFRKGHVPGKIIDQRIGFAAVAGEAVNDAVPELYSKALDEKKIRPMAQPEFDVQDVPQSANDETKLKFTATVERRPDIELPEIDGLEIAISKPEVKDEDVDKRLETLRQRFGTLVGVDRPAAKGDFANIDLTAEIDGETVDSQEGVSYELGSNTMLDGLDEALDGLSAGEETTFEGTLEAGEHEGQKATVKVKVNSVKAEELPELNDEFASEASEFDTLDELKADIRKAAAQDAEGRQATEARDAFIAKLQEGLEIPVPKGVKANMVEEQLKGMTPDPEKATKEQKAQAEETVEKDLRDQMVLDALAEKLDVQVSQSDVFNFLASIAQQYGMDPNNFIQAIIKNGQLGSAVQEVGRSKGLLAGMRAVKFTADGEVVDLSAFLGEAAEDEESESVEAASAAAAVADELSAKDDAKDAE</sequence>
<name>TIG_BIFLD</name>
<evidence type="ECO:0000255" key="1">
    <source>
        <dbReference type="HAMAP-Rule" id="MF_00303"/>
    </source>
</evidence>
<keyword id="KW-0131">Cell cycle</keyword>
<keyword id="KW-0132">Cell division</keyword>
<keyword id="KW-0143">Chaperone</keyword>
<keyword id="KW-0963">Cytoplasm</keyword>
<keyword id="KW-0413">Isomerase</keyword>
<keyword id="KW-0697">Rotamase</keyword>
<reference key="1">
    <citation type="journal article" date="2008" name="BMC Genomics">
        <title>Comparative genomic analysis of the gut bacterium Bifidobacterium longum reveals loci susceptible to deletion during pure culture growth.</title>
        <authorList>
            <person name="Lee J.H."/>
            <person name="Karamychev V.N."/>
            <person name="Kozyavkin S.A."/>
            <person name="Mills D."/>
            <person name="Pavlov A.R."/>
            <person name="Pavlova N.V."/>
            <person name="Polouchine N.N."/>
            <person name="Richardson P.M."/>
            <person name="Shakhova V.V."/>
            <person name="Slesarev A.I."/>
            <person name="Weimer B."/>
            <person name="O'Sullivan D.J."/>
        </authorList>
    </citation>
    <scope>NUCLEOTIDE SEQUENCE [LARGE SCALE GENOMIC DNA]</scope>
    <source>
        <strain>DJO10A</strain>
    </source>
</reference>
<organism>
    <name type="scientific">Bifidobacterium longum (strain DJO10A)</name>
    <dbReference type="NCBI Taxonomy" id="205913"/>
    <lineage>
        <taxon>Bacteria</taxon>
        <taxon>Bacillati</taxon>
        <taxon>Actinomycetota</taxon>
        <taxon>Actinomycetes</taxon>
        <taxon>Bifidobacteriales</taxon>
        <taxon>Bifidobacteriaceae</taxon>
        <taxon>Bifidobacterium</taxon>
    </lineage>
</organism>
<protein>
    <recommendedName>
        <fullName evidence="1">Trigger factor</fullName>
        <shortName evidence="1">TF</shortName>
        <ecNumber evidence="1">5.2.1.8</ecNumber>
    </recommendedName>
    <alternativeName>
        <fullName evidence="1">PPIase</fullName>
    </alternativeName>
</protein>
<gene>
    <name evidence="1" type="primary">tig</name>
    <name type="ordered locus">BLD_0689</name>
</gene>
<feature type="chain" id="PRO_1000115501" description="Trigger factor">
    <location>
        <begin position="1"/>
        <end position="459"/>
    </location>
</feature>
<feature type="domain" description="PPIase FKBP-type" evidence="1">
    <location>
        <begin position="166"/>
        <end position="245"/>
    </location>
</feature>